<sequence length="34" mass="3783">MEVNILAFIATALFILVPTAFLLIIYVKTVSQND</sequence>
<protein>
    <recommendedName>
        <fullName evidence="1">Photosystem II reaction center protein M</fullName>
        <shortName evidence="1">PSII-M</shortName>
    </recommendedName>
</protein>
<organism>
    <name type="scientific">Arabidopsis thaliana</name>
    <name type="common">Mouse-ear cress</name>
    <dbReference type="NCBI Taxonomy" id="3702"/>
    <lineage>
        <taxon>Eukaryota</taxon>
        <taxon>Viridiplantae</taxon>
        <taxon>Streptophyta</taxon>
        <taxon>Embryophyta</taxon>
        <taxon>Tracheophyta</taxon>
        <taxon>Spermatophyta</taxon>
        <taxon>Magnoliopsida</taxon>
        <taxon>eudicotyledons</taxon>
        <taxon>Gunneridae</taxon>
        <taxon>Pentapetalae</taxon>
        <taxon>rosids</taxon>
        <taxon>malvids</taxon>
        <taxon>Brassicales</taxon>
        <taxon>Brassicaceae</taxon>
        <taxon>Camelineae</taxon>
        <taxon>Arabidopsis</taxon>
    </lineage>
</organism>
<gene>
    <name evidence="1" type="primary">psbM</name>
    <name type="ordered locus">AtCg00220</name>
</gene>
<reference key="1">
    <citation type="journal article" date="1999" name="DNA Res.">
        <title>Complete structure of the chloroplast genome of Arabidopsis thaliana.</title>
        <authorList>
            <person name="Sato S."/>
            <person name="Nakamura Y."/>
            <person name="Kaneko T."/>
            <person name="Asamizu E."/>
            <person name="Tabata S."/>
        </authorList>
    </citation>
    <scope>NUCLEOTIDE SEQUENCE [LARGE SCALE GENOMIC DNA]</scope>
    <source>
        <strain>cv. Columbia</strain>
    </source>
</reference>
<dbReference type="EMBL" id="AP000423">
    <property type="protein sequence ID" value="BAA84379.1"/>
    <property type="molecule type" value="Genomic_DNA"/>
</dbReference>
<dbReference type="RefSeq" id="NP_051053.1">
    <property type="nucleotide sequence ID" value="NC_000932.1"/>
</dbReference>
<dbReference type="PDB" id="5MDX">
    <property type="method" value="EM"/>
    <property type="resolution" value="5.30 A"/>
    <property type="chains" value="M/m=1-34"/>
</dbReference>
<dbReference type="PDB" id="7OUI">
    <property type="method" value="EM"/>
    <property type="resolution" value="2.79 A"/>
    <property type="chains" value="M/m=1-34"/>
</dbReference>
<dbReference type="PDBsum" id="5MDX"/>
<dbReference type="PDBsum" id="7OUI"/>
<dbReference type="EMDB" id="EMD-13078"/>
<dbReference type="EMDB" id="EMD-3491"/>
<dbReference type="SMR" id="P62109"/>
<dbReference type="FunCoup" id="P62109">
    <property type="interactions" value="25"/>
</dbReference>
<dbReference type="IntAct" id="P62109">
    <property type="interactions" value="1"/>
</dbReference>
<dbReference type="STRING" id="3702.P62109"/>
<dbReference type="TCDB" id="3.E.2.2.3">
    <property type="family name" value="the photosynthetic reaction center (prc) family"/>
</dbReference>
<dbReference type="PaxDb" id="3702-ATCG00220.1"/>
<dbReference type="EnsemblPlants" id="ATCG00220.1">
    <property type="protein sequence ID" value="ATCG00220.1"/>
    <property type="gene ID" value="ATCG00220"/>
</dbReference>
<dbReference type="GeneID" id="844781"/>
<dbReference type="Gramene" id="ATCG00220.1">
    <property type="protein sequence ID" value="ATCG00220.1"/>
    <property type="gene ID" value="ATCG00220"/>
</dbReference>
<dbReference type="KEGG" id="ath:ArthCp016"/>
<dbReference type="Araport" id="ATCG00220"/>
<dbReference type="TAIR" id="ATCG00220">
    <property type="gene designation" value="PSBM"/>
</dbReference>
<dbReference type="eggNOG" id="ENOG502SD7U">
    <property type="taxonomic scope" value="Eukaryota"/>
</dbReference>
<dbReference type="HOGENOM" id="CLU_215415_1_0_1"/>
<dbReference type="InParanoid" id="P62109"/>
<dbReference type="PRO" id="PR:P62109"/>
<dbReference type="Proteomes" id="UP000006548">
    <property type="component" value="Chloroplast Pltd"/>
</dbReference>
<dbReference type="ExpressionAtlas" id="P62109">
    <property type="expression patterns" value="baseline and differential"/>
</dbReference>
<dbReference type="GO" id="GO:0009535">
    <property type="term" value="C:chloroplast thylakoid membrane"/>
    <property type="evidence" value="ECO:0007669"/>
    <property type="project" value="UniProtKB-SubCell"/>
</dbReference>
<dbReference type="GO" id="GO:0009523">
    <property type="term" value="C:photosystem II"/>
    <property type="evidence" value="ECO:0007669"/>
    <property type="project" value="UniProtKB-KW"/>
</dbReference>
<dbReference type="GO" id="GO:0019684">
    <property type="term" value="P:photosynthesis, light reaction"/>
    <property type="evidence" value="ECO:0007669"/>
    <property type="project" value="InterPro"/>
</dbReference>
<dbReference type="HAMAP" id="MF_00438">
    <property type="entry name" value="PSII_PsbM"/>
    <property type="match status" value="1"/>
</dbReference>
<dbReference type="InterPro" id="IPR007826">
    <property type="entry name" value="PSII_PsbM"/>
</dbReference>
<dbReference type="InterPro" id="IPR037269">
    <property type="entry name" value="PSII_PsbM_sf"/>
</dbReference>
<dbReference type="NCBIfam" id="TIGR03038">
    <property type="entry name" value="PS_II_psbM"/>
    <property type="match status" value="1"/>
</dbReference>
<dbReference type="PANTHER" id="PTHR35774">
    <property type="entry name" value="PHOTOSYSTEM II REACTION CENTER PROTEIN M"/>
    <property type="match status" value="1"/>
</dbReference>
<dbReference type="PANTHER" id="PTHR35774:SF1">
    <property type="entry name" value="PHOTOSYSTEM II REACTION CENTER PROTEIN M"/>
    <property type="match status" value="1"/>
</dbReference>
<dbReference type="Pfam" id="PF05151">
    <property type="entry name" value="PsbM"/>
    <property type="match status" value="1"/>
</dbReference>
<dbReference type="SUPFAM" id="SSF161033">
    <property type="entry name" value="Photosystem II reaction center protein M, PsbM"/>
    <property type="match status" value="1"/>
</dbReference>
<proteinExistence type="evidence at protein level"/>
<name>PSBM_ARATH</name>
<evidence type="ECO:0000255" key="1">
    <source>
        <dbReference type="HAMAP-Rule" id="MF_00438"/>
    </source>
</evidence>
<evidence type="ECO:0007829" key="2">
    <source>
        <dbReference type="PDB" id="7OUI"/>
    </source>
</evidence>
<feature type="chain" id="PRO_0000217549" description="Photosystem II reaction center protein M">
    <location>
        <begin position="1"/>
        <end position="34"/>
    </location>
</feature>
<feature type="transmembrane region" description="Helical" evidence="1">
    <location>
        <begin position="5"/>
        <end position="25"/>
    </location>
</feature>
<feature type="helix" evidence="2">
    <location>
        <begin position="6"/>
        <end position="31"/>
    </location>
</feature>
<accession>P62109</accession>
<accession>P12169</accession>
<geneLocation type="chloroplast"/>
<keyword id="KW-0002">3D-structure</keyword>
<keyword id="KW-0150">Chloroplast</keyword>
<keyword id="KW-0472">Membrane</keyword>
<keyword id="KW-0602">Photosynthesis</keyword>
<keyword id="KW-0604">Photosystem II</keyword>
<keyword id="KW-0934">Plastid</keyword>
<keyword id="KW-0674">Reaction center</keyword>
<keyword id="KW-1185">Reference proteome</keyword>
<keyword id="KW-0793">Thylakoid</keyword>
<keyword id="KW-0812">Transmembrane</keyword>
<keyword id="KW-1133">Transmembrane helix</keyword>
<comment type="function">
    <text evidence="1">One of the components of the core complex of photosystem II (PSII). PSII is a light-driven water:plastoquinone oxidoreductase that uses light energy to abstract electrons from H(2)O, generating O(2) and a proton gradient subsequently used for ATP formation. It consists of a core antenna complex that captures photons, and an electron transfer chain that converts photonic excitation into a charge separation. This subunit is found at the monomer-monomer interface.</text>
</comment>
<comment type="subunit">
    <text evidence="1">PSII is composed of 1 copy each of membrane proteins PsbA, PsbB, PsbC, PsbD, PsbE, PsbF, PsbH, PsbI, PsbJ, PsbK, PsbL, PsbM, PsbT, PsbX, PsbY, PsbZ, Psb30/Ycf12, at least 3 peripheral proteins of the oxygen-evolving complex and a large number of cofactors. It forms dimeric complexes.</text>
</comment>
<comment type="subcellular location">
    <subcellularLocation>
        <location evidence="1">Plastid</location>
        <location evidence="1">Chloroplast thylakoid membrane</location>
        <topology evidence="1">Single-pass membrane protein</topology>
    </subcellularLocation>
</comment>
<comment type="similarity">
    <text evidence="1">Belongs to the PsbM family.</text>
</comment>